<dbReference type="EC" id="2.7.7.6" evidence="1"/>
<dbReference type="EMBL" id="AE014133">
    <property type="protein sequence ID" value="AAN59604.1"/>
    <property type="molecule type" value="Genomic_DNA"/>
</dbReference>
<dbReference type="RefSeq" id="NP_722298.1">
    <property type="nucleotide sequence ID" value="NC_004350.2"/>
</dbReference>
<dbReference type="RefSeq" id="WP_002262315.1">
    <property type="nucleotide sequence ID" value="NC_004350.2"/>
</dbReference>
<dbReference type="SMR" id="Q8DS36"/>
<dbReference type="STRING" id="210007.SMU_2001"/>
<dbReference type="KEGG" id="smu:SMU_2001"/>
<dbReference type="PATRIC" id="fig|210007.7.peg.1781"/>
<dbReference type="eggNOG" id="COG0202">
    <property type="taxonomic scope" value="Bacteria"/>
</dbReference>
<dbReference type="HOGENOM" id="CLU_053084_0_1_9"/>
<dbReference type="OrthoDB" id="9805706at2"/>
<dbReference type="PhylomeDB" id="Q8DS36"/>
<dbReference type="Proteomes" id="UP000002512">
    <property type="component" value="Chromosome"/>
</dbReference>
<dbReference type="GO" id="GO:0005737">
    <property type="term" value="C:cytoplasm"/>
    <property type="evidence" value="ECO:0007669"/>
    <property type="project" value="UniProtKB-ARBA"/>
</dbReference>
<dbReference type="GO" id="GO:0000428">
    <property type="term" value="C:DNA-directed RNA polymerase complex"/>
    <property type="evidence" value="ECO:0007669"/>
    <property type="project" value="UniProtKB-KW"/>
</dbReference>
<dbReference type="GO" id="GO:0003677">
    <property type="term" value="F:DNA binding"/>
    <property type="evidence" value="ECO:0007669"/>
    <property type="project" value="UniProtKB-UniRule"/>
</dbReference>
<dbReference type="GO" id="GO:0003899">
    <property type="term" value="F:DNA-directed RNA polymerase activity"/>
    <property type="evidence" value="ECO:0007669"/>
    <property type="project" value="UniProtKB-UniRule"/>
</dbReference>
<dbReference type="GO" id="GO:0046983">
    <property type="term" value="F:protein dimerization activity"/>
    <property type="evidence" value="ECO:0007669"/>
    <property type="project" value="InterPro"/>
</dbReference>
<dbReference type="GO" id="GO:0006351">
    <property type="term" value="P:DNA-templated transcription"/>
    <property type="evidence" value="ECO:0007669"/>
    <property type="project" value="UniProtKB-UniRule"/>
</dbReference>
<dbReference type="CDD" id="cd06928">
    <property type="entry name" value="RNAP_alpha_NTD"/>
    <property type="match status" value="1"/>
</dbReference>
<dbReference type="FunFam" id="1.10.150.20:FF:000001">
    <property type="entry name" value="DNA-directed RNA polymerase subunit alpha"/>
    <property type="match status" value="1"/>
</dbReference>
<dbReference type="FunFam" id="2.170.120.12:FF:000001">
    <property type="entry name" value="DNA-directed RNA polymerase subunit alpha"/>
    <property type="match status" value="1"/>
</dbReference>
<dbReference type="Gene3D" id="1.10.150.20">
    <property type="entry name" value="5' to 3' exonuclease, C-terminal subdomain"/>
    <property type="match status" value="1"/>
</dbReference>
<dbReference type="Gene3D" id="2.170.120.12">
    <property type="entry name" value="DNA-directed RNA polymerase, insert domain"/>
    <property type="match status" value="1"/>
</dbReference>
<dbReference type="Gene3D" id="3.30.1360.10">
    <property type="entry name" value="RNA polymerase, RBP11-like subunit"/>
    <property type="match status" value="1"/>
</dbReference>
<dbReference type="HAMAP" id="MF_00059">
    <property type="entry name" value="RNApol_bact_RpoA"/>
    <property type="match status" value="1"/>
</dbReference>
<dbReference type="InterPro" id="IPR011262">
    <property type="entry name" value="DNA-dir_RNA_pol_insert"/>
</dbReference>
<dbReference type="InterPro" id="IPR011263">
    <property type="entry name" value="DNA-dir_RNA_pol_RpoA/D/Rpb3"/>
</dbReference>
<dbReference type="InterPro" id="IPR011773">
    <property type="entry name" value="DNA-dir_RpoA"/>
</dbReference>
<dbReference type="InterPro" id="IPR036603">
    <property type="entry name" value="RBP11-like"/>
</dbReference>
<dbReference type="InterPro" id="IPR011260">
    <property type="entry name" value="RNAP_asu_C"/>
</dbReference>
<dbReference type="InterPro" id="IPR036643">
    <property type="entry name" value="RNApol_insert_sf"/>
</dbReference>
<dbReference type="NCBIfam" id="NF003513">
    <property type="entry name" value="PRK05182.1-2"/>
    <property type="match status" value="1"/>
</dbReference>
<dbReference type="NCBIfam" id="NF003515">
    <property type="entry name" value="PRK05182.2-1"/>
    <property type="match status" value="1"/>
</dbReference>
<dbReference type="NCBIfam" id="NF003516">
    <property type="entry name" value="PRK05182.2-2"/>
    <property type="match status" value="1"/>
</dbReference>
<dbReference type="NCBIfam" id="NF003518">
    <property type="entry name" value="PRK05182.2-4"/>
    <property type="match status" value="1"/>
</dbReference>
<dbReference type="NCBIfam" id="NF003519">
    <property type="entry name" value="PRK05182.2-5"/>
    <property type="match status" value="1"/>
</dbReference>
<dbReference type="NCBIfam" id="TIGR02027">
    <property type="entry name" value="rpoA"/>
    <property type="match status" value="1"/>
</dbReference>
<dbReference type="Pfam" id="PF01000">
    <property type="entry name" value="RNA_pol_A_bac"/>
    <property type="match status" value="1"/>
</dbReference>
<dbReference type="Pfam" id="PF03118">
    <property type="entry name" value="RNA_pol_A_CTD"/>
    <property type="match status" value="1"/>
</dbReference>
<dbReference type="Pfam" id="PF01193">
    <property type="entry name" value="RNA_pol_L"/>
    <property type="match status" value="1"/>
</dbReference>
<dbReference type="SMART" id="SM00662">
    <property type="entry name" value="RPOLD"/>
    <property type="match status" value="1"/>
</dbReference>
<dbReference type="SUPFAM" id="SSF47789">
    <property type="entry name" value="C-terminal domain of RNA polymerase alpha subunit"/>
    <property type="match status" value="1"/>
</dbReference>
<dbReference type="SUPFAM" id="SSF56553">
    <property type="entry name" value="Insert subdomain of RNA polymerase alpha subunit"/>
    <property type="match status" value="1"/>
</dbReference>
<dbReference type="SUPFAM" id="SSF55257">
    <property type="entry name" value="RBP11-like subunits of RNA polymerase"/>
    <property type="match status" value="1"/>
</dbReference>
<keyword id="KW-0240">DNA-directed RNA polymerase</keyword>
<keyword id="KW-0548">Nucleotidyltransferase</keyword>
<keyword id="KW-1185">Reference proteome</keyword>
<keyword id="KW-0804">Transcription</keyword>
<keyword id="KW-0808">Transferase</keyword>
<accession>Q8DS36</accession>
<protein>
    <recommendedName>
        <fullName evidence="1">DNA-directed RNA polymerase subunit alpha</fullName>
        <shortName evidence="1">RNAP subunit alpha</shortName>
        <ecNumber evidence="1">2.7.7.6</ecNumber>
    </recommendedName>
    <alternativeName>
        <fullName evidence="1">RNA polymerase subunit alpha</fullName>
    </alternativeName>
    <alternativeName>
        <fullName evidence="1">Transcriptase subunit alpha</fullName>
    </alternativeName>
</protein>
<reference key="1">
    <citation type="journal article" date="2002" name="Proc. Natl. Acad. Sci. U.S.A.">
        <title>Genome sequence of Streptococcus mutans UA159, a cariogenic dental pathogen.</title>
        <authorList>
            <person name="Ajdic D.J."/>
            <person name="McShan W.M."/>
            <person name="McLaughlin R.E."/>
            <person name="Savic G."/>
            <person name="Chang J."/>
            <person name="Carson M.B."/>
            <person name="Primeaux C."/>
            <person name="Tian R."/>
            <person name="Kenton S."/>
            <person name="Jia H.G."/>
            <person name="Lin S.P."/>
            <person name="Qian Y."/>
            <person name="Li S."/>
            <person name="Zhu H."/>
            <person name="Najar F.Z."/>
            <person name="Lai H."/>
            <person name="White J."/>
            <person name="Roe B.A."/>
            <person name="Ferretti J.J."/>
        </authorList>
    </citation>
    <scope>NUCLEOTIDE SEQUENCE [LARGE SCALE GENOMIC DNA]</scope>
    <source>
        <strain>ATCC 700610 / UA159</strain>
    </source>
</reference>
<evidence type="ECO:0000255" key="1">
    <source>
        <dbReference type="HAMAP-Rule" id="MF_00059"/>
    </source>
</evidence>
<feature type="chain" id="PRO_0000175393" description="DNA-directed RNA polymerase subunit alpha">
    <location>
        <begin position="1"/>
        <end position="312"/>
    </location>
</feature>
<feature type="region of interest" description="Alpha N-terminal domain (alpha-NTD)" evidence="1">
    <location>
        <begin position="1"/>
        <end position="226"/>
    </location>
</feature>
<feature type="region of interest" description="Alpha C-terminal domain (alpha-CTD)" evidence="1">
    <location>
        <begin position="243"/>
        <end position="312"/>
    </location>
</feature>
<sequence length="312" mass="34570">MIEFEKPIITKIDENKDYGRFVIEPLERGYGTTLGNSLRRVLLSSLPGAAVTSIKIDGVLHEFDTIPGVREDVMQIILNIKGLAVKSYVEEEKIVELDVEGPAEITAGDILTDSDIEIVNPDHYLFTIAEGANLKATMTVATNRGYVPAEKNKRDDAPVGTLAIDSIYTPVKKVNYQVEPARVGSNDNFDKLTIEIMTNGTIIPEDALGLSARVLIEHLNLFTDLTEVAKATDVMKETEQVSDEKVLDRTIEELDLSVRSYNCLKRAGINTVYDLTEKSESEMMKVRNLGRKSLEEVKVKLADLGLGLKNDK</sequence>
<name>RPOA_STRMU</name>
<organism>
    <name type="scientific">Streptococcus mutans serotype c (strain ATCC 700610 / UA159)</name>
    <dbReference type="NCBI Taxonomy" id="210007"/>
    <lineage>
        <taxon>Bacteria</taxon>
        <taxon>Bacillati</taxon>
        <taxon>Bacillota</taxon>
        <taxon>Bacilli</taxon>
        <taxon>Lactobacillales</taxon>
        <taxon>Streptococcaceae</taxon>
        <taxon>Streptococcus</taxon>
    </lineage>
</organism>
<proteinExistence type="inferred from homology"/>
<gene>
    <name evidence="1" type="primary">rpoA</name>
    <name type="ordered locus">SMU_2001</name>
</gene>
<comment type="function">
    <text evidence="1">DNA-dependent RNA polymerase catalyzes the transcription of DNA into RNA using the four ribonucleoside triphosphates as substrates.</text>
</comment>
<comment type="catalytic activity">
    <reaction evidence="1">
        <text>RNA(n) + a ribonucleoside 5'-triphosphate = RNA(n+1) + diphosphate</text>
        <dbReference type="Rhea" id="RHEA:21248"/>
        <dbReference type="Rhea" id="RHEA-COMP:14527"/>
        <dbReference type="Rhea" id="RHEA-COMP:17342"/>
        <dbReference type="ChEBI" id="CHEBI:33019"/>
        <dbReference type="ChEBI" id="CHEBI:61557"/>
        <dbReference type="ChEBI" id="CHEBI:140395"/>
        <dbReference type="EC" id="2.7.7.6"/>
    </reaction>
</comment>
<comment type="subunit">
    <text evidence="1">Homodimer. The RNAP catalytic core consists of 2 alpha, 1 beta, 1 beta' and 1 omega subunit. When a sigma factor is associated with the core the holoenzyme is formed, which can initiate transcription.</text>
</comment>
<comment type="domain">
    <text evidence="1">The N-terminal domain is essential for RNAP assembly and basal transcription, whereas the C-terminal domain is involved in interaction with transcriptional regulators and with upstream promoter elements.</text>
</comment>
<comment type="similarity">
    <text evidence="1">Belongs to the RNA polymerase alpha chain family.</text>
</comment>